<dbReference type="EMBL" id="U12894">
    <property type="protein sequence ID" value="AAA57453.1"/>
    <property type="molecule type" value="Genomic_DNA"/>
</dbReference>
<dbReference type="PIR" id="C55853">
    <property type="entry name" value="C55853"/>
</dbReference>
<dbReference type="PDB" id="4PHX">
    <property type="method" value="X-ray"/>
    <property type="resolution" value="2.40 A"/>
    <property type="chains" value="A/B/C/D/E/F/G/H=25-145"/>
</dbReference>
<dbReference type="PDBsum" id="4PHX"/>
<dbReference type="SMR" id="P46006"/>
<dbReference type="EvolutionaryTrace" id="P46006"/>
<dbReference type="CDD" id="cd18776">
    <property type="entry name" value="AfaD-like"/>
    <property type="match status" value="1"/>
</dbReference>
<dbReference type="Gene3D" id="2.60.40.1570">
    <property type="entry name" value="Dr adhesin"/>
    <property type="match status" value="1"/>
</dbReference>
<dbReference type="InterPro" id="IPR008966">
    <property type="entry name" value="Adhesion_dom_sf"/>
</dbReference>
<dbReference type="InterPro" id="IPR008394">
    <property type="entry name" value="AfaD"/>
</dbReference>
<dbReference type="InterPro" id="IPR037028">
    <property type="entry name" value="Dr_adhesin_sf"/>
</dbReference>
<dbReference type="Pfam" id="PF05775">
    <property type="entry name" value="AfaD"/>
    <property type="match status" value="1"/>
</dbReference>
<dbReference type="SUPFAM" id="SSF49401">
    <property type="entry name" value="Bacterial adhesins"/>
    <property type="match status" value="1"/>
</dbReference>
<comment type="similarity">
    <text evidence="2">To E.coli AfaD.</text>
</comment>
<organism>
    <name type="scientific">Escherichia coli</name>
    <dbReference type="NCBI Taxonomy" id="562"/>
    <lineage>
        <taxon>Bacteria</taxon>
        <taxon>Pseudomonadati</taxon>
        <taxon>Pseudomonadota</taxon>
        <taxon>Gammaproteobacteria</taxon>
        <taxon>Enterobacterales</taxon>
        <taxon>Enterobacteriaceae</taxon>
        <taxon>Escherichia</taxon>
    </lineage>
</organism>
<keyword id="KW-0002">3D-structure</keyword>
<keyword id="KW-0614">Plasmid</keyword>
<keyword id="KW-0732">Signal</keyword>
<protein>
    <recommendedName>
        <fullName>Protein AggB</fullName>
    </recommendedName>
</protein>
<sequence length="145" mass="15837">MLKKSILPMSCGVLVMVMSGLLDAAEITLISHKTLGSQLRDGMKLATGRIACREPHDGFHIWINASQNGKVGHYIVQNNRETKHELKVKIGGGGWSSSLIEGQRGVYRQGEEKQAIFDIMSDGNQYSAPGEYIFSVSGECLISRG</sequence>
<evidence type="ECO:0000255" key="1"/>
<evidence type="ECO:0000305" key="2"/>
<evidence type="ECO:0007829" key="3">
    <source>
        <dbReference type="PDB" id="4PHX"/>
    </source>
</evidence>
<gene>
    <name type="primary">aggB</name>
</gene>
<geneLocation type="plasmid">
    <name>P17-2</name>
</geneLocation>
<name>AGGB_ECOLX</name>
<reference key="1">
    <citation type="journal article" date="1994" name="J. Bacteriol.">
        <title>Identification and characterization of a gene cluster mediating enteroaggregative Escherichia coli aggregative adherence fimbria I biogenesis.</title>
        <authorList>
            <person name="Savarino S.J."/>
            <person name="Fox P."/>
            <person name="Deng Y."/>
            <person name="Nataro J.P."/>
        </authorList>
    </citation>
    <scope>NUCLEOTIDE SEQUENCE [GENOMIC DNA]</scope>
    <source>
        <strain>O3:H2 / 17-2 / EAggEC</strain>
    </source>
</reference>
<proteinExistence type="evidence at protein level"/>
<accession>P46006</accession>
<feature type="signal peptide" evidence="1">
    <location>
        <begin position="1"/>
        <end position="24"/>
    </location>
</feature>
<feature type="chain" id="PRO_0000020643" description="Protein AggB">
    <location>
        <begin position="25"/>
        <end position="145"/>
    </location>
</feature>
<feature type="strand" evidence="3">
    <location>
        <begin position="26"/>
        <end position="31"/>
    </location>
</feature>
<feature type="strand" evidence="3">
    <location>
        <begin position="44"/>
        <end position="51"/>
    </location>
</feature>
<feature type="strand" evidence="3">
    <location>
        <begin position="59"/>
        <end position="67"/>
    </location>
</feature>
<feature type="strand" evidence="3">
    <location>
        <begin position="73"/>
        <end position="77"/>
    </location>
</feature>
<feature type="strand" evidence="3">
    <location>
        <begin position="85"/>
        <end position="91"/>
    </location>
</feature>
<feature type="strand" evidence="3">
    <location>
        <begin position="96"/>
        <end position="100"/>
    </location>
</feature>
<feature type="strand" evidence="3">
    <location>
        <begin position="103"/>
        <end position="108"/>
    </location>
</feature>
<feature type="strand" evidence="3">
    <location>
        <begin position="112"/>
        <end position="121"/>
    </location>
</feature>
<feature type="strand" evidence="3">
    <location>
        <begin position="123"/>
        <end position="126"/>
    </location>
</feature>
<feature type="strand" evidence="3">
    <location>
        <begin position="129"/>
        <end position="140"/>
    </location>
</feature>